<gene>
    <name evidence="9" type="primary">RPS11</name>
</gene>
<comment type="function">
    <text evidence="3 4">Component of the small ribosomal subunit. The ribosome is a large ribonucleoprotein complex responsible for the synthesis of proteins in the cell. Part of the small subunit (SSU) processome, first precursor of the small eukaryotic ribosomal subunit. During the assembly of the SSU processome in the nucleolus, many ribosome biogenesis factors, an RNA chaperone and ribosomal proteins associate with the nascent pre-rRNA and work in concert to generate RNA folding, modifications, rearrangements and cleavage as well as targeted degradation of pre-ribosomal RNA by the RNA exosome (PubMed:34516797).</text>
</comment>
<comment type="subunit">
    <text evidence="3 4">Component of the small ribosomal subunit. Part of the small subunit (SSU) processome, composed of more than 70 proteins and the RNA chaperone small nucleolar RNA (snoRNA) U3 (PubMed:34516797).</text>
</comment>
<comment type="interaction">
    <interactant intactId="EBI-1047710">
        <id>P62280</id>
    </interactant>
    <interactant intactId="EBI-5323863">
        <id>Q5S007</id>
        <label>LRRK2</label>
    </interactant>
    <organismsDiffer>false</organismsDiffer>
    <experiments>5</experiments>
</comment>
<comment type="interaction">
    <interactant intactId="EBI-1047710">
        <id>P62280</id>
    </interactant>
    <interactant intactId="EBI-358011">
        <id>Q99558</id>
        <label>MAP3K14</label>
    </interactant>
    <organismsDiffer>false</organismsDiffer>
    <experiments>3</experiments>
</comment>
<comment type="interaction">
    <interactant intactId="EBI-1047710">
        <id>P62280</id>
    </interactant>
    <interactant intactId="EBI-351811">
        <id>P62241</id>
        <label>RPS8</label>
    </interactant>
    <organismsDiffer>false</organismsDiffer>
    <experiments>2</experiments>
</comment>
<comment type="subcellular location">
    <subcellularLocation>
        <location evidence="3">Cytoplasm</location>
    </subcellularLocation>
    <subcellularLocation>
        <location evidence="4">Nucleus</location>
        <location evidence="4">Nucleolus</location>
    </subcellularLocation>
</comment>
<comment type="PTM">
    <text evidence="1">Citrullinated by PADI4.</text>
</comment>
<comment type="similarity">
    <text evidence="7">Belongs to the universal ribosomal protein uS17 family.</text>
</comment>
<proteinExistence type="evidence at protein level"/>
<feature type="initiator methionine" description="Removed" evidence="5 13 15 16">
    <location>
        <position position="1"/>
    </location>
</feature>
<feature type="chain" id="PRO_0000128509" description="Small ribosomal subunit protein uS17">
    <location>
        <begin position="2"/>
        <end position="158"/>
    </location>
</feature>
<feature type="modified residue" description="N-acetylalanine" evidence="5 13 15 16">
    <location>
        <position position="2"/>
    </location>
</feature>
<feature type="modified residue" description="Citrulline" evidence="1">
    <location>
        <position position="22"/>
    </location>
</feature>
<feature type="modified residue" description="N6-acetyllysine" evidence="14">
    <location>
        <position position="38"/>
    </location>
</feature>
<feature type="modified residue" description="N6-acetyllysine" evidence="14">
    <location>
        <position position="45"/>
    </location>
</feature>
<feature type="modified residue" description="N6-acetyllysine" evidence="1">
    <location>
        <position position="58"/>
    </location>
</feature>
<feature type="modified residue" description="Phosphoserine" evidence="17">
    <location>
        <position position="67"/>
    </location>
</feature>
<feature type="modified residue" description="Omega-N-methylarginine" evidence="1">
    <location>
        <position position="69"/>
    </location>
</feature>
<feature type="modified residue" description="Phosphoserine" evidence="17">
    <location>
        <position position="110"/>
    </location>
</feature>
<feature type="lipid moiety-binding region" description="S-palmitoyl cysteine" evidence="8">
    <location>
        <position position="60"/>
    </location>
</feature>
<feature type="mutagenesis site" description="Abolishes S-acylation." evidence="2">
    <original>C</original>
    <variation>S</variation>
    <location>
        <position position="60"/>
    </location>
</feature>
<feature type="strand" evidence="20">
    <location>
        <begin position="7"/>
        <end position="9"/>
    </location>
</feature>
<feature type="strand" evidence="22">
    <location>
        <begin position="14"/>
        <end position="16"/>
    </location>
</feature>
<feature type="helix" evidence="18">
    <location>
        <begin position="24"/>
        <end position="27"/>
    </location>
</feature>
<feature type="turn" evidence="19">
    <location>
        <begin position="28"/>
        <end position="30"/>
    </location>
</feature>
<feature type="strand" evidence="18">
    <location>
        <begin position="41"/>
        <end position="43"/>
    </location>
</feature>
<feature type="helix" evidence="20">
    <location>
        <begin position="48"/>
        <end position="51"/>
    </location>
</feature>
<feature type="turn" evidence="20">
    <location>
        <begin position="61"/>
        <end position="63"/>
    </location>
</feature>
<feature type="strand" evidence="20">
    <location>
        <begin position="72"/>
        <end position="79"/>
    </location>
</feature>
<feature type="strand" evidence="21">
    <location>
        <begin position="82"/>
        <end position="84"/>
    </location>
</feature>
<feature type="strand" evidence="20">
    <location>
        <begin position="85"/>
        <end position="96"/>
    </location>
</feature>
<feature type="turn" evidence="20">
    <location>
        <begin position="97"/>
        <end position="100"/>
    </location>
</feature>
<feature type="strand" evidence="20">
    <location>
        <begin position="101"/>
        <end position="112"/>
    </location>
</feature>
<feature type="strand" evidence="20">
    <location>
        <begin position="125"/>
        <end position="130"/>
    </location>
</feature>
<feature type="strand" evidence="20">
    <location>
        <begin position="135"/>
        <end position="137"/>
    </location>
</feature>
<feature type="strand" evidence="20">
    <location>
        <begin position="140"/>
        <end position="146"/>
    </location>
</feature>
<name>RS11_HUMAN</name>
<sequence>MADIQTERAYQKQPTIFQNKKRVLLGETGKEKLPRYYKNIGLGFKTPKEAIEGTYIDKKCPFTGNVSIRGRILSGVVTKMKMQRTIVIRRDYLHYIRKYNRFEKRHKNMSVHLSPCFRDVQIGDIVTVGECRPLSKTVRFNVLKVTKAAGTKKQFQKF</sequence>
<organism>
    <name type="scientific">Homo sapiens</name>
    <name type="common">Human</name>
    <dbReference type="NCBI Taxonomy" id="9606"/>
    <lineage>
        <taxon>Eukaryota</taxon>
        <taxon>Metazoa</taxon>
        <taxon>Chordata</taxon>
        <taxon>Craniata</taxon>
        <taxon>Vertebrata</taxon>
        <taxon>Euteleostomi</taxon>
        <taxon>Mammalia</taxon>
        <taxon>Eutheria</taxon>
        <taxon>Euarchontoglires</taxon>
        <taxon>Primates</taxon>
        <taxon>Haplorrhini</taxon>
        <taxon>Catarrhini</taxon>
        <taxon>Hominidae</taxon>
        <taxon>Homo</taxon>
    </lineage>
</organism>
<accession>P62280</accession>
<accession>B2R4F5</accession>
<accession>P04643</accession>
<accession>Q498Y6</accession>
<accession>Q6IRY0</accession>
<reference key="1">
    <citation type="journal article" date="1988" name="Nucleic Acids Res.">
        <title>Sequence of a cloned cDNA encoding human ribosomal protein S11.</title>
        <authorList>
            <person name="Lott J.B."/>
            <person name="Mackie G.A."/>
        </authorList>
    </citation>
    <scope>NUCLEOTIDE SEQUENCE [MRNA]</scope>
</reference>
<reference key="2">
    <citation type="journal article" date="1999" name="Gene">
        <title>Gene organization and sequence of the region containing the ribosomal protein genes RPL13A and RPS11 in the human genome and conserved features in the mouse genome.</title>
        <authorList>
            <person name="Higa S."/>
            <person name="Yoshihama M."/>
            <person name="Tanaka T."/>
            <person name="Kenmochi N."/>
        </authorList>
    </citation>
    <scope>NUCLEOTIDE SEQUENCE [GENOMIC DNA]</scope>
</reference>
<reference key="3">
    <citation type="journal article" date="2004" name="Nat. Genet.">
        <title>Complete sequencing and characterization of 21,243 full-length human cDNAs.</title>
        <authorList>
            <person name="Ota T."/>
            <person name="Suzuki Y."/>
            <person name="Nishikawa T."/>
            <person name="Otsuki T."/>
            <person name="Sugiyama T."/>
            <person name="Irie R."/>
            <person name="Wakamatsu A."/>
            <person name="Hayashi K."/>
            <person name="Sato H."/>
            <person name="Nagai K."/>
            <person name="Kimura K."/>
            <person name="Makita H."/>
            <person name="Sekine M."/>
            <person name="Obayashi M."/>
            <person name="Nishi T."/>
            <person name="Shibahara T."/>
            <person name="Tanaka T."/>
            <person name="Ishii S."/>
            <person name="Yamamoto J."/>
            <person name="Saito K."/>
            <person name="Kawai Y."/>
            <person name="Isono Y."/>
            <person name="Nakamura Y."/>
            <person name="Nagahari K."/>
            <person name="Murakami K."/>
            <person name="Yasuda T."/>
            <person name="Iwayanagi T."/>
            <person name="Wagatsuma M."/>
            <person name="Shiratori A."/>
            <person name="Sudo H."/>
            <person name="Hosoiri T."/>
            <person name="Kaku Y."/>
            <person name="Kodaira H."/>
            <person name="Kondo H."/>
            <person name="Sugawara M."/>
            <person name="Takahashi M."/>
            <person name="Kanda K."/>
            <person name="Yokoi T."/>
            <person name="Furuya T."/>
            <person name="Kikkawa E."/>
            <person name="Omura Y."/>
            <person name="Abe K."/>
            <person name="Kamihara K."/>
            <person name="Katsuta N."/>
            <person name="Sato K."/>
            <person name="Tanikawa M."/>
            <person name="Yamazaki M."/>
            <person name="Ninomiya K."/>
            <person name="Ishibashi T."/>
            <person name="Yamashita H."/>
            <person name="Murakawa K."/>
            <person name="Fujimori K."/>
            <person name="Tanai H."/>
            <person name="Kimata M."/>
            <person name="Watanabe M."/>
            <person name="Hiraoka S."/>
            <person name="Chiba Y."/>
            <person name="Ishida S."/>
            <person name="Ono Y."/>
            <person name="Takiguchi S."/>
            <person name="Watanabe S."/>
            <person name="Yosida M."/>
            <person name="Hotuta T."/>
            <person name="Kusano J."/>
            <person name="Kanehori K."/>
            <person name="Takahashi-Fujii A."/>
            <person name="Hara H."/>
            <person name="Tanase T.-O."/>
            <person name="Nomura Y."/>
            <person name="Togiya S."/>
            <person name="Komai F."/>
            <person name="Hara R."/>
            <person name="Takeuchi K."/>
            <person name="Arita M."/>
            <person name="Imose N."/>
            <person name="Musashino K."/>
            <person name="Yuuki H."/>
            <person name="Oshima A."/>
            <person name="Sasaki N."/>
            <person name="Aotsuka S."/>
            <person name="Yoshikawa Y."/>
            <person name="Matsunawa H."/>
            <person name="Ichihara T."/>
            <person name="Shiohata N."/>
            <person name="Sano S."/>
            <person name="Moriya S."/>
            <person name="Momiyama H."/>
            <person name="Satoh N."/>
            <person name="Takami S."/>
            <person name="Terashima Y."/>
            <person name="Suzuki O."/>
            <person name="Nakagawa S."/>
            <person name="Senoh A."/>
            <person name="Mizoguchi H."/>
            <person name="Goto Y."/>
            <person name="Shimizu F."/>
            <person name="Wakebe H."/>
            <person name="Hishigaki H."/>
            <person name="Watanabe T."/>
            <person name="Sugiyama A."/>
            <person name="Takemoto M."/>
            <person name="Kawakami B."/>
            <person name="Yamazaki M."/>
            <person name="Watanabe K."/>
            <person name="Kumagai A."/>
            <person name="Itakura S."/>
            <person name="Fukuzumi Y."/>
            <person name="Fujimori Y."/>
            <person name="Komiyama M."/>
            <person name="Tashiro H."/>
            <person name="Tanigami A."/>
            <person name="Fujiwara T."/>
            <person name="Ono T."/>
            <person name="Yamada K."/>
            <person name="Fujii Y."/>
            <person name="Ozaki K."/>
            <person name="Hirao M."/>
            <person name="Ohmori Y."/>
            <person name="Kawabata A."/>
            <person name="Hikiji T."/>
            <person name="Kobatake N."/>
            <person name="Inagaki H."/>
            <person name="Ikema Y."/>
            <person name="Okamoto S."/>
            <person name="Okitani R."/>
            <person name="Kawakami T."/>
            <person name="Noguchi S."/>
            <person name="Itoh T."/>
            <person name="Shigeta K."/>
            <person name="Senba T."/>
            <person name="Matsumura K."/>
            <person name="Nakajima Y."/>
            <person name="Mizuno T."/>
            <person name="Morinaga M."/>
            <person name="Sasaki M."/>
            <person name="Togashi T."/>
            <person name="Oyama M."/>
            <person name="Hata H."/>
            <person name="Watanabe M."/>
            <person name="Komatsu T."/>
            <person name="Mizushima-Sugano J."/>
            <person name="Satoh T."/>
            <person name="Shirai Y."/>
            <person name="Takahashi Y."/>
            <person name="Nakagawa K."/>
            <person name="Okumura K."/>
            <person name="Nagase T."/>
            <person name="Nomura N."/>
            <person name="Kikuchi H."/>
            <person name="Masuho Y."/>
            <person name="Yamashita R."/>
            <person name="Nakai K."/>
            <person name="Yada T."/>
            <person name="Nakamura Y."/>
            <person name="Ohara O."/>
            <person name="Isogai T."/>
            <person name="Sugano S."/>
        </authorList>
    </citation>
    <scope>NUCLEOTIDE SEQUENCE [LARGE SCALE MRNA]</scope>
    <source>
        <tissue>Thymus</tissue>
    </source>
</reference>
<reference key="4">
    <citation type="submission" date="2005-07" db="EMBL/GenBank/DDBJ databases">
        <authorList>
            <person name="Mural R.J."/>
            <person name="Istrail S."/>
            <person name="Sutton G.G."/>
            <person name="Florea L."/>
            <person name="Halpern A.L."/>
            <person name="Mobarry C.M."/>
            <person name="Lippert R."/>
            <person name="Walenz B."/>
            <person name="Shatkay H."/>
            <person name="Dew I."/>
            <person name="Miller J.R."/>
            <person name="Flanigan M.J."/>
            <person name="Edwards N.J."/>
            <person name="Bolanos R."/>
            <person name="Fasulo D."/>
            <person name="Halldorsson B.V."/>
            <person name="Hannenhalli S."/>
            <person name="Turner R."/>
            <person name="Yooseph S."/>
            <person name="Lu F."/>
            <person name="Nusskern D.R."/>
            <person name="Shue B.C."/>
            <person name="Zheng X.H."/>
            <person name="Zhong F."/>
            <person name="Delcher A.L."/>
            <person name="Huson D.H."/>
            <person name="Kravitz S.A."/>
            <person name="Mouchard L."/>
            <person name="Reinert K."/>
            <person name="Remington K.A."/>
            <person name="Clark A.G."/>
            <person name="Waterman M.S."/>
            <person name="Eichler E.E."/>
            <person name="Adams M.D."/>
            <person name="Hunkapiller M.W."/>
            <person name="Myers E.W."/>
            <person name="Venter J.C."/>
        </authorList>
    </citation>
    <scope>NUCLEOTIDE SEQUENCE [LARGE SCALE GENOMIC DNA]</scope>
</reference>
<reference key="5">
    <citation type="journal article" date="2004" name="Genome Res.">
        <title>The status, quality, and expansion of the NIH full-length cDNA project: the Mammalian Gene Collection (MGC).</title>
        <authorList>
            <consortium name="The MGC Project Team"/>
        </authorList>
    </citation>
    <scope>NUCLEOTIDE SEQUENCE [LARGE SCALE MRNA]</scope>
    <source>
        <tissue>B-cell</tissue>
        <tissue>Eye</tissue>
        <tissue>Lung</tissue>
        <tissue>Prostate</tissue>
    </source>
</reference>
<reference key="6">
    <citation type="submission" date="2006-05" db="UniProtKB">
        <authorList>
            <person name="Bienvenut W.V."/>
            <person name="Kanor S."/>
            <person name="Tissot J.-D."/>
            <person name="Quadroni M."/>
        </authorList>
    </citation>
    <scope>PROTEIN SEQUENCE OF 2-11</scope>
    <scope>CLEAVAGE OF INITIATOR METHIONINE</scope>
    <scope>ACETYLATION AT ALA-2</scope>
    <scope>IDENTIFICATION BY MASS SPECTROMETRY</scope>
    <source>
        <tissue>T-cell</tissue>
    </source>
</reference>
<reference key="7">
    <citation type="journal article" date="1996" name="Eur. J. Biochem.">
        <title>Characterization of the human small-ribosomal-subunit proteins by N-terminal and internal sequencing, and mass spectrometry.</title>
        <authorList>
            <person name="Vladimirov S.N."/>
            <person name="Ivanov A.V."/>
            <person name="Karpova G.G."/>
            <person name="Musolyamov A.K."/>
            <person name="Egorov T.A."/>
            <person name="Thiede B."/>
            <person name="Wittmann-Liebold B."/>
            <person name="Otto A."/>
        </authorList>
    </citation>
    <scope>PROTEIN SEQUENCE OF 39-45 AND 137-143</scope>
    <source>
        <tissue>Placenta</tissue>
    </source>
</reference>
<reference key="8">
    <citation type="journal article" date="1998" name="Genome Res.">
        <title>A map of 75 human ribosomal protein genes.</title>
        <authorList>
            <person name="Kenmochi N."/>
            <person name="Kawaguchi T."/>
            <person name="Rozen S."/>
            <person name="Davis E."/>
            <person name="Goodman N."/>
            <person name="Hudson T.J."/>
            <person name="Tanaka T."/>
            <person name="Page D.C."/>
        </authorList>
    </citation>
    <scope>NUCLEOTIDE SEQUENCE [GENOMIC DNA] OF 76-158</scope>
</reference>
<reference key="9">
    <citation type="journal article" date="2009" name="Anal. Chem.">
        <title>Lys-N and trypsin cover complementary parts of the phosphoproteome in a refined SCX-based approach.</title>
        <authorList>
            <person name="Gauci S."/>
            <person name="Helbig A.O."/>
            <person name="Slijper M."/>
            <person name="Krijgsveld J."/>
            <person name="Heck A.J."/>
            <person name="Mohammed S."/>
        </authorList>
    </citation>
    <scope>ACETYLATION [LARGE SCALE ANALYSIS] AT ALA-2</scope>
    <scope>CLEAVAGE OF INITIATOR METHIONINE [LARGE SCALE ANALYSIS]</scope>
    <scope>IDENTIFICATION BY MASS SPECTROMETRY [LARGE SCALE ANALYSIS]</scope>
</reference>
<reference key="10">
    <citation type="journal article" date="2009" name="Science">
        <title>Lysine acetylation targets protein complexes and co-regulates major cellular functions.</title>
        <authorList>
            <person name="Choudhary C."/>
            <person name="Kumar C."/>
            <person name="Gnad F."/>
            <person name="Nielsen M.L."/>
            <person name="Rehman M."/>
            <person name="Walther T.C."/>
            <person name="Olsen J.V."/>
            <person name="Mann M."/>
        </authorList>
    </citation>
    <scope>ACETYLATION [LARGE SCALE ANALYSIS] AT LYS-38 AND LYS-45</scope>
    <scope>IDENTIFICATION BY MASS SPECTROMETRY [LARGE SCALE ANALYSIS]</scope>
</reference>
<reference key="11">
    <citation type="journal article" date="2011" name="BMC Syst. Biol.">
        <title>Initial characterization of the human central proteome.</title>
        <authorList>
            <person name="Burkard T.R."/>
            <person name="Planyavsky M."/>
            <person name="Kaupe I."/>
            <person name="Breitwieser F.P."/>
            <person name="Buerckstuemmer T."/>
            <person name="Bennett K.L."/>
            <person name="Superti-Furga G."/>
            <person name="Colinge J."/>
        </authorList>
    </citation>
    <scope>IDENTIFICATION BY MASS SPECTROMETRY [LARGE SCALE ANALYSIS]</scope>
</reference>
<reference key="12">
    <citation type="journal article" date="2011" name="J. Lipid Res.">
        <title>Site-specific analysis of protein S-acylation by resin-assisted capture.</title>
        <authorList>
            <person name="Forrester M.T."/>
            <person name="Hess D.T."/>
            <person name="Thompson J.W."/>
            <person name="Hultman R."/>
            <person name="Moseley M.A."/>
            <person name="Stamler J.S."/>
            <person name="Casey P.J."/>
        </authorList>
    </citation>
    <scope>MUTAGENESIS OF CYS-60</scope>
    <scope>PALMITOYLATION AT CYS-60</scope>
</reference>
<reference key="13">
    <citation type="journal article" date="2012" name="Mol. Cell. Proteomics">
        <title>Comparative large-scale characterisation of plant vs. mammal proteins reveals similar and idiosyncratic N-alpha acetylation features.</title>
        <authorList>
            <person name="Bienvenut W.V."/>
            <person name="Sumpton D."/>
            <person name="Martinez A."/>
            <person name="Lilla S."/>
            <person name="Espagne C."/>
            <person name="Meinnel T."/>
            <person name="Giglione C."/>
        </authorList>
    </citation>
    <scope>ACETYLATION [LARGE SCALE ANALYSIS] AT ALA-2</scope>
    <scope>CLEAVAGE OF INITIATOR METHIONINE [LARGE SCALE ANALYSIS]</scope>
    <scope>IDENTIFICATION BY MASS SPECTROMETRY [LARGE SCALE ANALYSIS]</scope>
</reference>
<reference key="14">
    <citation type="journal article" date="2012" name="Proc. Natl. Acad. Sci. U.S.A.">
        <title>N-terminal acetylome analyses and functional insights of the N-terminal acetyltransferase NatB.</title>
        <authorList>
            <person name="Van Damme P."/>
            <person name="Lasa M."/>
            <person name="Polevoda B."/>
            <person name="Gazquez C."/>
            <person name="Elosegui-Artola A."/>
            <person name="Kim D.S."/>
            <person name="De Juan-Pardo E."/>
            <person name="Demeyer K."/>
            <person name="Hole K."/>
            <person name="Larrea E."/>
            <person name="Timmerman E."/>
            <person name="Prieto J."/>
            <person name="Arnesen T."/>
            <person name="Sherman F."/>
            <person name="Gevaert K."/>
            <person name="Aldabe R."/>
        </authorList>
    </citation>
    <scope>ACETYLATION [LARGE SCALE ANALYSIS] AT ALA-2</scope>
    <scope>CLEAVAGE OF INITIATOR METHIONINE [LARGE SCALE ANALYSIS]</scope>
    <scope>IDENTIFICATION BY MASS SPECTROMETRY [LARGE SCALE ANALYSIS]</scope>
</reference>
<reference key="15">
    <citation type="journal article" date="2013" name="J. Proteome Res.">
        <title>Toward a comprehensive characterization of a human cancer cell phosphoproteome.</title>
        <authorList>
            <person name="Zhou H."/>
            <person name="Di Palma S."/>
            <person name="Preisinger C."/>
            <person name="Peng M."/>
            <person name="Polat A.N."/>
            <person name="Heck A.J."/>
            <person name="Mohammed S."/>
        </authorList>
    </citation>
    <scope>PHOSPHORYLATION [LARGE SCALE ANALYSIS] AT SER-67 AND SER-110</scope>
    <scope>IDENTIFICATION BY MASS SPECTROMETRY [LARGE SCALE ANALYSIS]</scope>
    <source>
        <tissue>Erythroleukemia</tissue>
    </source>
</reference>
<reference key="16">
    <citation type="journal article" date="2014" name="Curr. Opin. Struct. Biol.">
        <title>A new system for naming ribosomal proteins.</title>
        <authorList>
            <person name="Ban N."/>
            <person name="Beckmann R."/>
            <person name="Cate J.H.D."/>
            <person name="Dinman J.D."/>
            <person name="Dragon F."/>
            <person name="Ellis S.R."/>
            <person name="Lafontaine D.L.J."/>
            <person name="Lindahl L."/>
            <person name="Liljas A."/>
            <person name="Lipton J.M."/>
            <person name="McAlear M.A."/>
            <person name="Moore P.B."/>
            <person name="Noller H.F."/>
            <person name="Ortega J."/>
            <person name="Panse V.G."/>
            <person name="Ramakrishnan V."/>
            <person name="Spahn C.M.T."/>
            <person name="Steitz T.A."/>
            <person name="Tchorzewski M."/>
            <person name="Tollervey D."/>
            <person name="Warren A.J."/>
            <person name="Williamson J.R."/>
            <person name="Wilson D."/>
            <person name="Yonath A."/>
            <person name="Yusupov M."/>
        </authorList>
    </citation>
    <scope>NOMENCLATURE</scope>
</reference>
<reference key="17">
    <citation type="journal article" date="2014" name="J. Proteomics">
        <title>An enzyme assisted RP-RPLC approach for in-depth analysis of human liver phosphoproteome.</title>
        <authorList>
            <person name="Bian Y."/>
            <person name="Song C."/>
            <person name="Cheng K."/>
            <person name="Dong M."/>
            <person name="Wang F."/>
            <person name="Huang J."/>
            <person name="Sun D."/>
            <person name="Wang L."/>
            <person name="Ye M."/>
            <person name="Zou H."/>
        </authorList>
    </citation>
    <scope>IDENTIFICATION BY MASS SPECTROMETRY [LARGE SCALE ANALYSIS]</scope>
    <source>
        <tissue>Liver</tissue>
    </source>
</reference>
<reference key="18">
    <citation type="journal article" date="2015" name="Proteomics">
        <title>N-terminome analysis of the human mitochondrial proteome.</title>
        <authorList>
            <person name="Vaca Jacome A.S."/>
            <person name="Rabilloud T."/>
            <person name="Schaeffer-Reiss C."/>
            <person name="Rompais M."/>
            <person name="Ayoub D."/>
            <person name="Lane L."/>
            <person name="Bairoch A."/>
            <person name="Van Dorsselaer A."/>
            <person name="Carapito C."/>
        </authorList>
    </citation>
    <scope>IDENTIFICATION BY MASS SPECTROMETRY [LARGE SCALE ANALYSIS]</scope>
</reference>
<reference key="19">
    <citation type="journal article" date="2013" name="Nature">
        <title>Structures of the human and Drosophila 80S ribosome.</title>
        <authorList>
            <person name="Anger A.M."/>
            <person name="Armache J.P."/>
            <person name="Berninghausen O."/>
            <person name="Habeck M."/>
            <person name="Subklewe M."/>
            <person name="Wilson D.N."/>
            <person name="Beckmann R."/>
        </authorList>
    </citation>
    <scope>STRUCTURE BY ELECTRON MICROSCOPY (5.0 ANGSTROMS) OF RIBOSOME</scope>
    <scope>FUNCTION</scope>
    <scope>SUBUNIT</scope>
    <scope>SUBCELLULAR LOCATION</scope>
</reference>
<reference evidence="10 11 12" key="20">
    <citation type="journal article" date="2021" name="Science">
        <title>Nucleolar maturation of the human small subunit processome.</title>
        <authorList>
            <person name="Singh S."/>
            <person name="Vanden Broeck A."/>
            <person name="Miller L."/>
            <person name="Chaker-Margot M."/>
            <person name="Klinge S."/>
        </authorList>
    </citation>
    <scope>STRUCTURE BY ELECTRON MICROSCOPY (2.70 ANGSTROMS)</scope>
    <scope>FUNCTION</scope>
    <scope>SUBUNIT</scope>
    <scope>SUBCELLULAR LOCATION</scope>
</reference>
<dbReference type="EMBL" id="X06617">
    <property type="protein sequence ID" value="CAA29834.1"/>
    <property type="molecule type" value="mRNA"/>
</dbReference>
<dbReference type="EMBL" id="AB028893">
    <property type="protein sequence ID" value="BAA88215.1"/>
    <property type="molecule type" value="Genomic_DNA"/>
</dbReference>
<dbReference type="EMBL" id="AK311809">
    <property type="protein sequence ID" value="BAG34752.1"/>
    <property type="molecule type" value="mRNA"/>
</dbReference>
<dbReference type="EMBL" id="CH471177">
    <property type="protein sequence ID" value="EAW52497.1"/>
    <property type="molecule type" value="Genomic_DNA"/>
</dbReference>
<dbReference type="EMBL" id="BC007283">
    <property type="protein sequence ID" value="AAH07283.1"/>
    <property type="molecule type" value="mRNA"/>
</dbReference>
<dbReference type="EMBL" id="BC007603">
    <property type="protein sequence ID" value="AAH07603.1"/>
    <property type="molecule type" value="mRNA"/>
</dbReference>
<dbReference type="EMBL" id="BC007945">
    <property type="protein sequence ID" value="AAH07945.1"/>
    <property type="molecule type" value="mRNA"/>
</dbReference>
<dbReference type="EMBL" id="BC010028">
    <property type="protein sequence ID" value="AAH10028.1"/>
    <property type="molecule type" value="mRNA"/>
</dbReference>
<dbReference type="EMBL" id="BC016378">
    <property type="protein sequence ID" value="AAH16378.1"/>
    <property type="molecule type" value="mRNA"/>
</dbReference>
<dbReference type="EMBL" id="BC070224">
    <property type="protein sequence ID" value="AAH70224.1"/>
    <property type="molecule type" value="mRNA"/>
</dbReference>
<dbReference type="EMBL" id="BC100025">
    <property type="protein sequence ID" value="AAI00026.1"/>
    <property type="molecule type" value="mRNA"/>
</dbReference>
<dbReference type="EMBL" id="AB007152">
    <property type="protein sequence ID" value="BAA25818.1"/>
    <property type="molecule type" value="Genomic_DNA"/>
</dbReference>
<dbReference type="CCDS" id="CCDS12769.1"/>
<dbReference type="PIR" id="S02133">
    <property type="entry name" value="R3HU11"/>
</dbReference>
<dbReference type="RefSeq" id="NP_001006.1">
    <property type="nucleotide sequence ID" value="NM_001015.5"/>
</dbReference>
<dbReference type="PDB" id="4UG0">
    <property type="method" value="EM"/>
    <property type="chains" value="SL=1-158"/>
</dbReference>
<dbReference type="PDB" id="4V6X">
    <property type="method" value="EM"/>
    <property type="resolution" value="5.00 A"/>
    <property type="chains" value="AL=1-158"/>
</dbReference>
<dbReference type="PDB" id="5A2Q">
    <property type="method" value="EM"/>
    <property type="resolution" value="3.90 A"/>
    <property type="chains" value="L=1-158"/>
</dbReference>
<dbReference type="PDB" id="5AJ0">
    <property type="method" value="EM"/>
    <property type="resolution" value="3.50 A"/>
    <property type="chains" value="BL=1-158"/>
</dbReference>
<dbReference type="PDB" id="5FLX">
    <property type="method" value="EM"/>
    <property type="resolution" value="3.90 A"/>
    <property type="chains" value="L=1-158"/>
</dbReference>
<dbReference type="PDB" id="5LKS">
    <property type="method" value="EM"/>
    <property type="resolution" value="3.60 A"/>
    <property type="chains" value="SL=1-158"/>
</dbReference>
<dbReference type="PDB" id="5OA3">
    <property type="method" value="EM"/>
    <property type="resolution" value="4.30 A"/>
    <property type="chains" value="L=1-158"/>
</dbReference>
<dbReference type="PDB" id="5T2C">
    <property type="method" value="EM"/>
    <property type="resolution" value="3.60 A"/>
    <property type="chains" value="Aw=1-158"/>
</dbReference>
<dbReference type="PDB" id="5VYC">
    <property type="method" value="X-ray"/>
    <property type="resolution" value="6.00 A"/>
    <property type="chains" value="L1/L2/L3/L4/L5/L6=1-158"/>
</dbReference>
<dbReference type="PDB" id="6FEC">
    <property type="method" value="EM"/>
    <property type="resolution" value="6.30 A"/>
    <property type="chains" value="G=1-158"/>
</dbReference>
<dbReference type="PDB" id="6G18">
    <property type="method" value="EM"/>
    <property type="resolution" value="3.60 A"/>
    <property type="chains" value="L=1-158"/>
</dbReference>
<dbReference type="PDB" id="6G4S">
    <property type="method" value="EM"/>
    <property type="resolution" value="4.00 A"/>
    <property type="chains" value="L=1-158"/>
</dbReference>
<dbReference type="PDB" id="6G4W">
    <property type="method" value="EM"/>
    <property type="resolution" value="4.50 A"/>
    <property type="chains" value="L=1-158"/>
</dbReference>
<dbReference type="PDB" id="6G51">
    <property type="method" value="EM"/>
    <property type="resolution" value="4.10 A"/>
    <property type="chains" value="L=1-158"/>
</dbReference>
<dbReference type="PDB" id="6G53">
    <property type="method" value="EM"/>
    <property type="resolution" value="4.50 A"/>
    <property type="chains" value="L=1-158"/>
</dbReference>
<dbReference type="PDB" id="6G5H">
    <property type="method" value="EM"/>
    <property type="resolution" value="3.60 A"/>
    <property type="chains" value="L=1-158"/>
</dbReference>
<dbReference type="PDB" id="6G5I">
    <property type="method" value="EM"/>
    <property type="resolution" value="3.50 A"/>
    <property type="chains" value="L=1-158"/>
</dbReference>
<dbReference type="PDB" id="6IP5">
    <property type="method" value="EM"/>
    <property type="resolution" value="3.90 A"/>
    <property type="chains" value="2v=1-158"/>
</dbReference>
<dbReference type="PDB" id="6IP6">
    <property type="method" value="EM"/>
    <property type="resolution" value="4.50 A"/>
    <property type="chains" value="2v=1-158"/>
</dbReference>
<dbReference type="PDB" id="6IP8">
    <property type="method" value="EM"/>
    <property type="resolution" value="3.90 A"/>
    <property type="chains" value="2v=1-158"/>
</dbReference>
<dbReference type="PDB" id="6OLE">
    <property type="method" value="EM"/>
    <property type="resolution" value="3.10 A"/>
    <property type="chains" value="SL=2-154"/>
</dbReference>
<dbReference type="PDB" id="6OLF">
    <property type="method" value="EM"/>
    <property type="resolution" value="3.90 A"/>
    <property type="chains" value="SL=2-154"/>
</dbReference>
<dbReference type="PDB" id="6OLG">
    <property type="method" value="EM"/>
    <property type="resolution" value="3.40 A"/>
    <property type="chains" value="BL=6-158"/>
</dbReference>
<dbReference type="PDB" id="6OLI">
    <property type="method" value="EM"/>
    <property type="resolution" value="3.50 A"/>
    <property type="chains" value="SL=2-154"/>
</dbReference>
<dbReference type="PDB" id="6OLZ">
    <property type="method" value="EM"/>
    <property type="resolution" value="3.90 A"/>
    <property type="chains" value="BL=6-158"/>
</dbReference>
<dbReference type="PDB" id="6OM0">
    <property type="method" value="EM"/>
    <property type="resolution" value="3.10 A"/>
    <property type="chains" value="SL=2-154"/>
</dbReference>
<dbReference type="PDB" id="6OM7">
    <property type="method" value="EM"/>
    <property type="resolution" value="3.70 A"/>
    <property type="chains" value="SL=2-154"/>
</dbReference>
<dbReference type="PDB" id="6QZP">
    <property type="method" value="EM"/>
    <property type="resolution" value="2.90 A"/>
    <property type="chains" value="SL=2-154"/>
</dbReference>
<dbReference type="PDB" id="6XA1">
    <property type="method" value="EM"/>
    <property type="resolution" value="2.80 A"/>
    <property type="chains" value="SL=2-151"/>
</dbReference>
<dbReference type="PDB" id="6Y0G">
    <property type="method" value="EM"/>
    <property type="resolution" value="3.20 A"/>
    <property type="chains" value="SL=1-158"/>
</dbReference>
<dbReference type="PDB" id="6Y2L">
    <property type="method" value="EM"/>
    <property type="resolution" value="3.00 A"/>
    <property type="chains" value="SL=1-158"/>
</dbReference>
<dbReference type="PDB" id="6Y57">
    <property type="method" value="EM"/>
    <property type="resolution" value="3.50 A"/>
    <property type="chains" value="SL=1-158"/>
</dbReference>
<dbReference type="PDB" id="6YBW">
    <property type="method" value="EM"/>
    <property type="resolution" value="3.10 A"/>
    <property type="chains" value="B=1-157"/>
</dbReference>
<dbReference type="PDB" id="6Z6L">
    <property type="method" value="EM"/>
    <property type="resolution" value="3.00 A"/>
    <property type="chains" value="SL=1-158"/>
</dbReference>
<dbReference type="PDB" id="6Z6M">
    <property type="method" value="EM"/>
    <property type="resolution" value="3.10 A"/>
    <property type="chains" value="SL=1-158"/>
</dbReference>
<dbReference type="PDB" id="6Z6N">
    <property type="method" value="EM"/>
    <property type="resolution" value="2.90 A"/>
    <property type="chains" value="SL=1-158"/>
</dbReference>
<dbReference type="PDB" id="6ZLW">
    <property type="method" value="EM"/>
    <property type="resolution" value="2.60 A"/>
    <property type="chains" value="L=1-158"/>
</dbReference>
<dbReference type="PDB" id="6ZM7">
    <property type="method" value="EM"/>
    <property type="resolution" value="2.70 A"/>
    <property type="chains" value="SL=1-158"/>
</dbReference>
<dbReference type="PDB" id="6ZME">
    <property type="method" value="EM"/>
    <property type="resolution" value="3.00 A"/>
    <property type="chains" value="SL=1-158"/>
</dbReference>
<dbReference type="PDB" id="6ZMI">
    <property type="method" value="EM"/>
    <property type="resolution" value="2.60 A"/>
    <property type="chains" value="SL=1-158"/>
</dbReference>
<dbReference type="PDB" id="6ZMO">
    <property type="method" value="EM"/>
    <property type="resolution" value="3.10 A"/>
    <property type="chains" value="SL=1-158"/>
</dbReference>
<dbReference type="PDB" id="6ZMT">
    <property type="method" value="EM"/>
    <property type="resolution" value="3.00 A"/>
    <property type="chains" value="L=1-158"/>
</dbReference>
<dbReference type="PDB" id="6ZMW">
    <property type="method" value="EM"/>
    <property type="resolution" value="3.70 A"/>
    <property type="chains" value="B=1-158"/>
</dbReference>
<dbReference type="PDB" id="6ZN5">
    <property type="method" value="EM"/>
    <property type="resolution" value="3.20 A"/>
    <property type="chains" value="L=2-152"/>
</dbReference>
<dbReference type="PDB" id="6ZOJ">
    <property type="method" value="EM"/>
    <property type="resolution" value="2.80 A"/>
    <property type="chains" value="L=1-158"/>
</dbReference>
<dbReference type="PDB" id="6ZOK">
    <property type="method" value="EM"/>
    <property type="resolution" value="2.80 A"/>
    <property type="chains" value="L=1-158"/>
</dbReference>
<dbReference type="PDB" id="6ZON">
    <property type="method" value="EM"/>
    <property type="resolution" value="3.00 A"/>
    <property type="chains" value="n=1-158"/>
</dbReference>
<dbReference type="PDB" id="6ZP4">
    <property type="method" value="EM"/>
    <property type="resolution" value="2.90 A"/>
    <property type="chains" value="n=1-158"/>
</dbReference>
<dbReference type="PDB" id="6ZUO">
    <property type="method" value="EM"/>
    <property type="resolution" value="3.10 A"/>
    <property type="chains" value="L=1-158"/>
</dbReference>
<dbReference type="PDB" id="6ZV6">
    <property type="method" value="EM"/>
    <property type="resolution" value="2.90 A"/>
    <property type="chains" value="L=1-158"/>
</dbReference>
<dbReference type="PDB" id="6ZVH">
    <property type="method" value="EM"/>
    <property type="resolution" value="2.90 A"/>
    <property type="chains" value="L=2-154"/>
</dbReference>
<dbReference type="PDB" id="6ZVJ">
    <property type="method" value="EM"/>
    <property type="resolution" value="3.80 A"/>
    <property type="chains" value="n=4-147"/>
</dbReference>
<dbReference type="PDB" id="6ZXD">
    <property type="method" value="EM"/>
    <property type="resolution" value="3.20 A"/>
    <property type="chains" value="L=1-158"/>
</dbReference>
<dbReference type="PDB" id="6ZXE">
    <property type="method" value="EM"/>
    <property type="resolution" value="3.00 A"/>
    <property type="chains" value="L=1-158"/>
</dbReference>
<dbReference type="PDB" id="6ZXF">
    <property type="method" value="EM"/>
    <property type="resolution" value="3.70 A"/>
    <property type="chains" value="L=1-158"/>
</dbReference>
<dbReference type="PDB" id="6ZXG">
    <property type="method" value="EM"/>
    <property type="resolution" value="2.60 A"/>
    <property type="chains" value="L=1-158"/>
</dbReference>
<dbReference type="PDB" id="6ZXH">
    <property type="method" value="EM"/>
    <property type="resolution" value="2.70 A"/>
    <property type="chains" value="L=1-158"/>
</dbReference>
<dbReference type="PDB" id="7A09">
    <property type="method" value="EM"/>
    <property type="resolution" value="3.50 A"/>
    <property type="chains" value="n=1-158"/>
</dbReference>
<dbReference type="PDB" id="7K5I">
    <property type="method" value="EM"/>
    <property type="resolution" value="2.90 A"/>
    <property type="chains" value="L=1-158"/>
</dbReference>
<dbReference type="PDB" id="7MQ8">
    <property type="method" value="EM"/>
    <property type="resolution" value="3.60 A"/>
    <property type="chains" value="LD=1-158"/>
</dbReference>
<dbReference type="PDB" id="7MQ9">
    <property type="method" value="EM"/>
    <property type="resolution" value="3.87 A"/>
    <property type="chains" value="LD=1-158"/>
</dbReference>
<dbReference type="PDB" id="7MQA">
    <property type="method" value="EM"/>
    <property type="resolution" value="2.70 A"/>
    <property type="chains" value="LD=1-158"/>
</dbReference>
<dbReference type="PDB" id="7QP6">
    <property type="method" value="EM"/>
    <property type="resolution" value="4.70 A"/>
    <property type="chains" value="B=1-158"/>
</dbReference>
<dbReference type="PDB" id="7QP7">
    <property type="method" value="EM"/>
    <property type="resolution" value="3.70 A"/>
    <property type="chains" value="B=1-158"/>
</dbReference>
<dbReference type="PDB" id="7R4X">
    <property type="method" value="EM"/>
    <property type="resolution" value="2.15 A"/>
    <property type="chains" value="L=1-158"/>
</dbReference>
<dbReference type="PDB" id="7TQL">
    <property type="method" value="EM"/>
    <property type="resolution" value="3.40 A"/>
    <property type="chains" value="L=2-148"/>
</dbReference>
<dbReference type="PDB" id="7WTS">
    <property type="method" value="EM"/>
    <property type="resolution" value="3.20 A"/>
    <property type="chains" value="L=1-158"/>
</dbReference>
<dbReference type="PDB" id="7WTT">
    <property type="method" value="EM"/>
    <property type="resolution" value="3.10 A"/>
    <property type="chains" value="L=1-158"/>
</dbReference>
<dbReference type="PDB" id="7WTU">
    <property type="method" value="EM"/>
    <property type="resolution" value="3.00 A"/>
    <property type="chains" value="L=1-158"/>
</dbReference>
<dbReference type="PDB" id="7WTV">
    <property type="method" value="EM"/>
    <property type="resolution" value="3.50 A"/>
    <property type="chains" value="L=1-158"/>
</dbReference>
<dbReference type="PDB" id="7WTW">
    <property type="method" value="EM"/>
    <property type="resolution" value="3.20 A"/>
    <property type="chains" value="L=1-158"/>
</dbReference>
<dbReference type="PDB" id="7WTX">
    <property type="method" value="EM"/>
    <property type="resolution" value="3.10 A"/>
    <property type="chains" value="L=1-158"/>
</dbReference>
<dbReference type="PDB" id="7WTZ">
    <property type="method" value="EM"/>
    <property type="resolution" value="3.00 A"/>
    <property type="chains" value="L=1-158"/>
</dbReference>
<dbReference type="PDB" id="7WU0">
    <property type="method" value="EM"/>
    <property type="resolution" value="3.30 A"/>
    <property type="chains" value="L=1-158"/>
</dbReference>
<dbReference type="PDB" id="7XNX">
    <property type="method" value="EM"/>
    <property type="resolution" value="2.70 A"/>
    <property type="chains" value="SL=1-158"/>
</dbReference>
<dbReference type="PDB" id="7XNY">
    <property type="method" value="EM"/>
    <property type="resolution" value="2.50 A"/>
    <property type="chains" value="SL=1-158"/>
</dbReference>
<dbReference type="PDB" id="8G5Y">
    <property type="method" value="EM"/>
    <property type="resolution" value="2.29 A"/>
    <property type="chains" value="SL=1-158"/>
</dbReference>
<dbReference type="PDB" id="8G60">
    <property type="method" value="EM"/>
    <property type="resolution" value="2.54 A"/>
    <property type="chains" value="SL=1-158"/>
</dbReference>
<dbReference type="PDB" id="8G61">
    <property type="method" value="EM"/>
    <property type="resolution" value="2.94 A"/>
    <property type="chains" value="SL=1-158"/>
</dbReference>
<dbReference type="PDB" id="8G6J">
    <property type="method" value="EM"/>
    <property type="resolution" value="2.80 A"/>
    <property type="chains" value="SL=1-158"/>
</dbReference>
<dbReference type="PDB" id="8GLP">
    <property type="method" value="EM"/>
    <property type="resolution" value="1.67 A"/>
    <property type="chains" value="SL=1-158"/>
</dbReference>
<dbReference type="PDB" id="8IFD">
    <property type="method" value="EM"/>
    <property type="resolution" value="2.59 A"/>
    <property type="chains" value="2v=1-158"/>
</dbReference>
<dbReference type="PDB" id="8IFE">
    <property type="method" value="EM"/>
    <property type="resolution" value="2.57 A"/>
    <property type="chains" value="2v=1-158"/>
</dbReference>
<dbReference type="PDB" id="8JDJ">
    <property type="method" value="EM"/>
    <property type="resolution" value="2.50 A"/>
    <property type="chains" value="8=1-158"/>
</dbReference>
<dbReference type="PDB" id="8JDK">
    <property type="method" value="EM"/>
    <property type="resolution" value="2.26 A"/>
    <property type="chains" value="8=1-158"/>
</dbReference>
<dbReference type="PDB" id="8JDL">
    <property type="method" value="EM"/>
    <property type="resolution" value="2.42 A"/>
    <property type="chains" value="8=1-158"/>
</dbReference>
<dbReference type="PDB" id="8JDM">
    <property type="method" value="EM"/>
    <property type="resolution" value="2.67 A"/>
    <property type="chains" value="8=1-158"/>
</dbReference>
<dbReference type="PDB" id="8K2C">
    <property type="method" value="EM"/>
    <property type="resolution" value="2.40 A"/>
    <property type="chains" value="SL=1-158"/>
</dbReference>
<dbReference type="PDB" id="8OZ0">
    <property type="method" value="EM"/>
    <property type="resolution" value="3.50 A"/>
    <property type="chains" value="X=1-158"/>
</dbReference>
<dbReference type="PDB" id="8PJ1">
    <property type="method" value="EM"/>
    <property type="resolution" value="3.40 A"/>
    <property type="chains" value="B=1-158"/>
</dbReference>
<dbReference type="PDB" id="8PJ2">
    <property type="method" value="EM"/>
    <property type="resolution" value="3.40 A"/>
    <property type="chains" value="B=1-158"/>
</dbReference>
<dbReference type="PDB" id="8PJ3">
    <property type="method" value="EM"/>
    <property type="resolution" value="3.70 A"/>
    <property type="chains" value="B=1-158"/>
</dbReference>
<dbReference type="PDB" id="8PJ4">
    <property type="method" value="EM"/>
    <property type="resolution" value="3.20 A"/>
    <property type="chains" value="B=1-158"/>
</dbReference>
<dbReference type="PDB" id="8PJ5">
    <property type="method" value="EM"/>
    <property type="resolution" value="2.90 A"/>
    <property type="chains" value="B=1-158"/>
</dbReference>
<dbReference type="PDB" id="8PJ6">
    <property type="method" value="EM"/>
    <property type="resolution" value="2.90 A"/>
    <property type="chains" value="B=1-158"/>
</dbReference>
<dbReference type="PDB" id="8PPK">
    <property type="method" value="EM"/>
    <property type="resolution" value="2.98 A"/>
    <property type="chains" value="L=1-158"/>
</dbReference>
<dbReference type="PDB" id="8PPL">
    <property type="method" value="EM"/>
    <property type="resolution" value="2.65 A"/>
    <property type="chains" value="AL=1-158"/>
</dbReference>
<dbReference type="PDB" id="8QOI">
    <property type="method" value="EM"/>
    <property type="resolution" value="1.90 A"/>
    <property type="chains" value="SL=1-158"/>
</dbReference>
<dbReference type="PDB" id="8T4S">
    <property type="method" value="EM"/>
    <property type="resolution" value="2.60 A"/>
    <property type="chains" value="L=1-158"/>
</dbReference>
<dbReference type="PDB" id="8UKB">
    <property type="method" value="EM"/>
    <property type="resolution" value="3.05 A"/>
    <property type="chains" value="SL=2-154"/>
</dbReference>
<dbReference type="PDB" id="8XP2">
    <property type="method" value="EM"/>
    <property type="resolution" value="3.20 A"/>
    <property type="chains" value="SL=1-158"/>
</dbReference>
<dbReference type="PDB" id="8XP3">
    <property type="method" value="EM"/>
    <property type="resolution" value="3.40 A"/>
    <property type="chains" value="SL=1-158"/>
</dbReference>
<dbReference type="PDB" id="8XSX">
    <property type="method" value="EM"/>
    <property type="resolution" value="2.40 A"/>
    <property type="chains" value="SL=1-158"/>
</dbReference>
<dbReference type="PDB" id="8XSY">
    <property type="method" value="EM"/>
    <property type="resolution" value="3.00 A"/>
    <property type="chains" value="SL=1-158"/>
</dbReference>
<dbReference type="PDB" id="8XSZ">
    <property type="method" value="EM"/>
    <property type="resolution" value="3.20 A"/>
    <property type="chains" value="SL=1-158"/>
</dbReference>
<dbReference type="PDB" id="8XXL">
    <property type="method" value="EM"/>
    <property type="resolution" value="2.90 A"/>
    <property type="chains" value="SL=1-158"/>
</dbReference>
<dbReference type="PDB" id="8XXM">
    <property type="method" value="EM"/>
    <property type="resolution" value="3.20 A"/>
    <property type="chains" value="SL=1-158"/>
</dbReference>
<dbReference type="PDB" id="8XXN">
    <property type="method" value="EM"/>
    <property type="resolution" value="3.60 A"/>
    <property type="chains" value="SL=1-158"/>
</dbReference>
<dbReference type="PDB" id="8Y0W">
    <property type="method" value="EM"/>
    <property type="resolution" value="3.40 A"/>
    <property type="chains" value="SL=1-158"/>
</dbReference>
<dbReference type="PDB" id="8Y0X">
    <property type="method" value="EM"/>
    <property type="resolution" value="3.30 A"/>
    <property type="chains" value="SL=1-158"/>
</dbReference>
<dbReference type="PDB" id="8YOO">
    <property type="method" value="EM"/>
    <property type="resolution" value="2.00 A"/>
    <property type="chains" value="SL=1-158"/>
</dbReference>
<dbReference type="PDB" id="8YOP">
    <property type="method" value="EM"/>
    <property type="resolution" value="2.20 A"/>
    <property type="chains" value="SL=1-158"/>
</dbReference>
<dbReference type="PDB" id="8ZDB">
    <property type="method" value="EM"/>
    <property type="resolution" value="3.60 A"/>
    <property type="chains" value="L=1-158"/>
</dbReference>
<dbReference type="PDB" id="8ZDC">
    <property type="method" value="EM"/>
    <property type="resolution" value="3.80 A"/>
    <property type="chains" value="L=1-158"/>
</dbReference>
<dbReference type="PDB" id="8ZDD">
    <property type="method" value="EM"/>
    <property type="resolution" value="3.70 A"/>
    <property type="chains" value="L=1-158"/>
</dbReference>
<dbReference type="PDB" id="9BKD">
    <property type="method" value="EM"/>
    <property type="resolution" value="2.60 A"/>
    <property type="chains" value="B=1-158"/>
</dbReference>
<dbReference type="PDB" id="9BLN">
    <property type="method" value="EM"/>
    <property type="resolution" value="3.90 A"/>
    <property type="chains" value="B=1-158"/>
</dbReference>
<dbReference type="PDB" id="9C3H">
    <property type="method" value="EM"/>
    <property type="resolution" value="2.00 A"/>
    <property type="chains" value="SL=1-158"/>
</dbReference>
<dbReference type="PDB" id="9G8M">
    <property type="method" value="EM"/>
    <property type="resolution" value="3.30 A"/>
    <property type="chains" value="SL=1-158"/>
</dbReference>
<dbReference type="PDB" id="9G8O">
    <property type="method" value="EM"/>
    <property type="resolution" value="3.40 A"/>
    <property type="chains" value="SL=1-158"/>
</dbReference>
<dbReference type="PDBsum" id="4UG0"/>
<dbReference type="PDBsum" id="4V6X"/>
<dbReference type="PDBsum" id="5A2Q"/>
<dbReference type="PDBsum" id="5AJ0"/>
<dbReference type="PDBsum" id="5FLX"/>
<dbReference type="PDBsum" id="5LKS"/>
<dbReference type="PDBsum" id="5OA3"/>
<dbReference type="PDBsum" id="5T2C"/>
<dbReference type="PDBsum" id="5VYC"/>
<dbReference type="PDBsum" id="6FEC"/>
<dbReference type="PDBsum" id="6G18"/>
<dbReference type="PDBsum" id="6G4S"/>
<dbReference type="PDBsum" id="6G4W"/>
<dbReference type="PDBsum" id="6G51"/>
<dbReference type="PDBsum" id="6G53"/>
<dbReference type="PDBsum" id="6G5H"/>
<dbReference type="PDBsum" id="6G5I"/>
<dbReference type="PDBsum" id="6IP5"/>
<dbReference type="PDBsum" id="6IP6"/>
<dbReference type="PDBsum" id="6IP8"/>
<dbReference type="PDBsum" id="6OLE"/>
<dbReference type="PDBsum" id="6OLF"/>
<dbReference type="PDBsum" id="6OLG"/>
<dbReference type="PDBsum" id="6OLI"/>
<dbReference type="PDBsum" id="6OLZ"/>
<dbReference type="PDBsum" id="6OM0"/>
<dbReference type="PDBsum" id="6OM7"/>
<dbReference type="PDBsum" id="6QZP"/>
<dbReference type="PDBsum" id="6XA1"/>
<dbReference type="PDBsum" id="6Y0G"/>
<dbReference type="PDBsum" id="6Y2L"/>
<dbReference type="PDBsum" id="6Y57"/>
<dbReference type="PDBsum" id="6YBW"/>
<dbReference type="PDBsum" id="6Z6L"/>
<dbReference type="PDBsum" id="6Z6M"/>
<dbReference type="PDBsum" id="6Z6N"/>
<dbReference type="PDBsum" id="6ZLW"/>
<dbReference type="PDBsum" id="6ZM7"/>
<dbReference type="PDBsum" id="6ZME"/>
<dbReference type="PDBsum" id="6ZMI"/>
<dbReference type="PDBsum" id="6ZMO"/>
<dbReference type="PDBsum" id="6ZMT"/>
<dbReference type="PDBsum" id="6ZMW"/>
<dbReference type="PDBsum" id="6ZN5"/>
<dbReference type="PDBsum" id="6ZOJ"/>
<dbReference type="PDBsum" id="6ZOK"/>
<dbReference type="PDBsum" id="6ZON"/>
<dbReference type="PDBsum" id="6ZP4"/>
<dbReference type="PDBsum" id="6ZUO"/>
<dbReference type="PDBsum" id="6ZV6"/>
<dbReference type="PDBsum" id="6ZVH"/>
<dbReference type="PDBsum" id="6ZVJ"/>
<dbReference type="PDBsum" id="6ZXD"/>
<dbReference type="PDBsum" id="6ZXE"/>
<dbReference type="PDBsum" id="6ZXF"/>
<dbReference type="PDBsum" id="6ZXG"/>
<dbReference type="PDBsum" id="6ZXH"/>
<dbReference type="PDBsum" id="7A09"/>
<dbReference type="PDBsum" id="7K5I"/>
<dbReference type="PDBsum" id="7MQ8"/>
<dbReference type="PDBsum" id="7MQ9"/>
<dbReference type="PDBsum" id="7MQA"/>
<dbReference type="PDBsum" id="7QP6"/>
<dbReference type="PDBsum" id="7QP7"/>
<dbReference type="PDBsum" id="7R4X"/>
<dbReference type="PDBsum" id="7TQL"/>
<dbReference type="PDBsum" id="7WTS"/>
<dbReference type="PDBsum" id="7WTT"/>
<dbReference type="PDBsum" id="7WTU"/>
<dbReference type="PDBsum" id="7WTV"/>
<dbReference type="PDBsum" id="7WTW"/>
<dbReference type="PDBsum" id="7WTX"/>
<dbReference type="PDBsum" id="7WTZ"/>
<dbReference type="PDBsum" id="7WU0"/>
<dbReference type="PDBsum" id="7XNX"/>
<dbReference type="PDBsum" id="7XNY"/>
<dbReference type="PDBsum" id="8G5Y"/>
<dbReference type="PDBsum" id="8G60"/>
<dbReference type="PDBsum" id="8G61"/>
<dbReference type="PDBsum" id="8G6J"/>
<dbReference type="PDBsum" id="8GLP"/>
<dbReference type="PDBsum" id="8IFD"/>
<dbReference type="PDBsum" id="8IFE"/>
<dbReference type="PDBsum" id="8JDJ"/>
<dbReference type="PDBsum" id="8JDK"/>
<dbReference type="PDBsum" id="8JDL"/>
<dbReference type="PDBsum" id="8JDM"/>
<dbReference type="PDBsum" id="8K2C"/>
<dbReference type="PDBsum" id="8OZ0"/>
<dbReference type="PDBsum" id="8PJ1"/>
<dbReference type="PDBsum" id="8PJ2"/>
<dbReference type="PDBsum" id="8PJ3"/>
<dbReference type="PDBsum" id="8PJ4"/>
<dbReference type="PDBsum" id="8PJ5"/>
<dbReference type="PDBsum" id="8PJ6"/>
<dbReference type="PDBsum" id="8PPK"/>
<dbReference type="PDBsum" id="8PPL"/>
<dbReference type="PDBsum" id="8QOI"/>
<dbReference type="PDBsum" id="8T4S"/>
<dbReference type="PDBsum" id="8UKB"/>
<dbReference type="PDBsum" id="8XP2"/>
<dbReference type="PDBsum" id="8XP3"/>
<dbReference type="PDBsum" id="8XSX"/>
<dbReference type="PDBsum" id="8XSY"/>
<dbReference type="PDBsum" id="8XSZ"/>
<dbReference type="PDBsum" id="8XXL"/>
<dbReference type="PDBsum" id="8XXM"/>
<dbReference type="PDBsum" id="8XXN"/>
<dbReference type="PDBsum" id="8Y0W"/>
<dbReference type="PDBsum" id="8Y0X"/>
<dbReference type="PDBsum" id="8YOO"/>
<dbReference type="PDBsum" id="8YOP"/>
<dbReference type="PDBsum" id="8ZDB"/>
<dbReference type="PDBsum" id="8ZDC"/>
<dbReference type="PDBsum" id="8ZDD"/>
<dbReference type="PDBsum" id="9BKD"/>
<dbReference type="PDBsum" id="9BLN"/>
<dbReference type="PDBsum" id="9C3H"/>
<dbReference type="PDBsum" id="9G8M"/>
<dbReference type="PDBsum" id="9G8O"/>
<dbReference type="EMDB" id="EMD-10668"/>
<dbReference type="EMDB" id="EMD-10674"/>
<dbReference type="EMDB" id="EMD-10690"/>
<dbReference type="EMDB" id="EMD-10775"/>
<dbReference type="EMDB" id="EMD-11098"/>
<dbReference type="EMDB" id="EMD-11099"/>
<dbReference type="EMDB" id="EMD-11100"/>
<dbReference type="EMDB" id="EMD-11276"/>
<dbReference type="EMDB" id="EMD-11288"/>
<dbReference type="EMDB" id="EMD-11289"/>
<dbReference type="EMDB" id="EMD-11292"/>
<dbReference type="EMDB" id="EMD-11299"/>
<dbReference type="EMDB" id="EMD-11301"/>
<dbReference type="EMDB" id="EMD-11302"/>
<dbReference type="EMDB" id="EMD-11310"/>
<dbReference type="EMDB" id="EMD-11320"/>
<dbReference type="EMDB" id="EMD-11321"/>
<dbReference type="EMDB" id="EMD-11325"/>
<dbReference type="EMDB" id="EMD-11335"/>
<dbReference type="EMDB" id="EMD-11440"/>
<dbReference type="EMDB" id="EMD-11441"/>
<dbReference type="EMDB" id="EMD-11456"/>
<dbReference type="EMDB" id="EMD-11458"/>
<dbReference type="EMDB" id="EMD-11517"/>
<dbReference type="EMDB" id="EMD-11518"/>
<dbReference type="EMDB" id="EMD-11519"/>
<dbReference type="EMDB" id="EMD-11520"/>
<dbReference type="EMDB" id="EMD-11521"/>
<dbReference type="EMDB" id="EMD-11602"/>
<dbReference type="EMDB" id="EMD-14113"/>
<dbReference type="EMDB" id="EMD-14114"/>
<dbReference type="EMDB" id="EMD-14317"/>
<dbReference type="EMDB" id="EMD-17297"/>
<dbReference type="EMDB" id="EMD-17696"/>
<dbReference type="EMDB" id="EMD-17697"/>
<dbReference type="EMDB" id="EMD-17698"/>
<dbReference type="EMDB" id="EMD-17699"/>
<dbReference type="EMDB" id="EMD-17700"/>
<dbReference type="EMDB" id="EMD-17701"/>
<dbReference type="EMDB" id="EMD-17804"/>
<dbReference type="EMDB" id="EMD-17805"/>
<dbReference type="EMDB" id="EMD-18539"/>
<dbReference type="EMDB" id="EMD-22681"/>
<dbReference type="EMDB" id="EMD-23936"/>
<dbReference type="EMDB" id="EMD-23937"/>
<dbReference type="EMDB" id="EMD-23938"/>
<dbReference type="EMDB" id="EMD-26067"/>
<dbReference type="EMDB" id="EMD-29757"/>
<dbReference type="EMDB" id="EMD-29758"/>
<dbReference type="EMDB" id="EMD-29759"/>
<dbReference type="EMDB" id="EMD-29760"/>
<dbReference type="EMDB" id="EMD-29771"/>
<dbReference type="EMDB" id="EMD-32799"/>
<dbReference type="EMDB" id="EMD-32800"/>
<dbReference type="EMDB" id="EMD-32801"/>
<dbReference type="EMDB" id="EMD-32802"/>
<dbReference type="EMDB" id="EMD-32803"/>
<dbReference type="EMDB" id="EMD-32804"/>
<dbReference type="EMDB" id="EMD-32806"/>
<dbReference type="EMDB" id="EMD-32807"/>
<dbReference type="EMDB" id="EMD-33329"/>
<dbReference type="EMDB" id="EMD-33330"/>
<dbReference type="EMDB" id="EMD-35413"/>
<dbReference type="EMDB" id="EMD-35414"/>
<dbReference type="EMDB" id="EMD-36178"/>
<dbReference type="EMDB" id="EMD-36179"/>
<dbReference type="EMDB" id="EMD-36180"/>
<dbReference type="EMDB" id="EMD-36181"/>
<dbReference type="EMDB" id="EMD-36838"/>
<dbReference type="EMDB" id="EMD-3770"/>
<dbReference type="EMDB" id="EMD-38548"/>
<dbReference type="EMDB" id="EMD-38549"/>
<dbReference type="EMDB" id="EMD-38629"/>
<dbReference type="EMDB" id="EMD-38630"/>
<dbReference type="EMDB" id="EMD-38631"/>
<dbReference type="EMDB" id="EMD-38752"/>
<dbReference type="EMDB" id="EMD-38753"/>
<dbReference type="EMDB" id="EMD-38754"/>
<dbReference type="EMDB" id="EMD-3883"/>
<dbReference type="EMDB" id="EMD-39455"/>
<dbReference type="EMDB" id="EMD-39456"/>
<dbReference type="EMDB" id="EMD-39956"/>
<dbReference type="EMDB" id="EMD-39957"/>
<dbReference type="EMDB" id="EMD-39958"/>
<dbReference type="EMDB" id="EMD-40205"/>
<dbReference type="EMDB" id="EMD-4070"/>
<dbReference type="EMDB" id="EMD-41039"/>
<dbReference type="EMDB" id="EMD-42351"/>
<dbReference type="EMDB" id="EMD-4242"/>
<dbReference type="EMDB" id="EMD-4337"/>
<dbReference type="EMDB" id="EMD-4348"/>
<dbReference type="EMDB" id="EMD-4349"/>
<dbReference type="EMDB" id="EMD-4350"/>
<dbReference type="EMDB" id="EMD-4351"/>
<dbReference type="EMDB" id="EMD-4352"/>
<dbReference type="EMDB" id="EMD-4353"/>
<dbReference type="EMDB" id="EMD-44641"/>
<dbReference type="EMDB" id="EMD-44671"/>
<dbReference type="EMDB" id="EMD-45170"/>
<dbReference type="EMDB" id="EMD-51132"/>
<dbReference type="EMDB" id="EMD-51134"/>
<dbReference type="EMDB" id="EMD-9701"/>
<dbReference type="EMDB" id="EMD-9702"/>
<dbReference type="EMDB" id="EMD-9703"/>
<dbReference type="SMR" id="P62280"/>
<dbReference type="BioGRID" id="112119">
    <property type="interactions" value="520"/>
</dbReference>
<dbReference type="ComplexPortal" id="CPX-5223">
    <property type="entry name" value="40S cytosolic small ribosomal subunit"/>
</dbReference>
<dbReference type="CORUM" id="P62280"/>
<dbReference type="FunCoup" id="P62280">
    <property type="interactions" value="2117"/>
</dbReference>
<dbReference type="IntAct" id="P62280">
    <property type="interactions" value="658"/>
</dbReference>
<dbReference type="MINT" id="P62280"/>
<dbReference type="STRING" id="9606.ENSP00000270625"/>
<dbReference type="GlyGen" id="P62280">
    <property type="glycosylation" value="2 sites, 1 O-linked glycan (2 sites)"/>
</dbReference>
<dbReference type="iPTMnet" id="P62280"/>
<dbReference type="PhosphoSitePlus" id="P62280"/>
<dbReference type="SwissPalm" id="P62280"/>
<dbReference type="BioMuta" id="RPS11"/>
<dbReference type="DMDM" id="50403609"/>
<dbReference type="jPOST" id="P62280"/>
<dbReference type="MassIVE" id="P62280"/>
<dbReference type="PaxDb" id="9606-ENSP00000270625"/>
<dbReference type="PeptideAtlas" id="P62280"/>
<dbReference type="ProteomicsDB" id="57385"/>
<dbReference type="Pumba" id="P62280"/>
<dbReference type="TopDownProteomics" id="P62280"/>
<dbReference type="Antibodypedia" id="32033">
    <property type="antibodies" value="208 antibodies from 26 providers"/>
</dbReference>
<dbReference type="DNASU" id="6205"/>
<dbReference type="Ensembl" id="ENST00000270625.7">
    <property type="protein sequence ID" value="ENSP00000270625.1"/>
    <property type="gene ID" value="ENSG00000142534.7"/>
</dbReference>
<dbReference type="GeneID" id="6205"/>
<dbReference type="KEGG" id="hsa:6205"/>
<dbReference type="MANE-Select" id="ENST00000270625.7">
    <property type="protein sequence ID" value="ENSP00000270625.1"/>
    <property type="RefSeq nucleotide sequence ID" value="NM_001015.5"/>
    <property type="RefSeq protein sequence ID" value="NP_001006.1"/>
</dbReference>
<dbReference type="UCSC" id="uc002pob.3">
    <property type="organism name" value="human"/>
</dbReference>
<dbReference type="AGR" id="HGNC:10384"/>
<dbReference type="CTD" id="6205"/>
<dbReference type="DisGeNET" id="6205"/>
<dbReference type="GeneCards" id="RPS11"/>
<dbReference type="HGNC" id="HGNC:10384">
    <property type="gene designation" value="RPS11"/>
</dbReference>
<dbReference type="HPA" id="ENSG00000142534">
    <property type="expression patterns" value="Low tissue specificity"/>
</dbReference>
<dbReference type="MalaCards" id="RPS11"/>
<dbReference type="MIM" id="180471">
    <property type="type" value="gene"/>
</dbReference>
<dbReference type="neXtProt" id="NX_P62280"/>
<dbReference type="OpenTargets" id="ENSG00000142534"/>
<dbReference type="PharmGKB" id="PA34782"/>
<dbReference type="VEuPathDB" id="HostDB:ENSG00000142534"/>
<dbReference type="eggNOG" id="KOG1728">
    <property type="taxonomic scope" value="Eukaryota"/>
</dbReference>
<dbReference type="GeneTree" id="ENSGT00390000002732"/>
<dbReference type="HOGENOM" id="CLU_073626_0_2_1"/>
<dbReference type="InParanoid" id="P62280"/>
<dbReference type="OMA" id="DYEKCPF"/>
<dbReference type="OrthoDB" id="10254436at2759"/>
<dbReference type="PAN-GO" id="P62280">
    <property type="GO annotations" value="2 GO annotations based on evolutionary models"/>
</dbReference>
<dbReference type="PhylomeDB" id="P62280"/>
<dbReference type="TreeFam" id="TF300126"/>
<dbReference type="PathwayCommons" id="P62280"/>
<dbReference type="Reactome" id="R-HSA-156827">
    <property type="pathway name" value="L13a-mediated translational silencing of Ceruloplasmin expression"/>
</dbReference>
<dbReference type="Reactome" id="R-HSA-156902">
    <property type="pathway name" value="Peptide chain elongation"/>
</dbReference>
<dbReference type="Reactome" id="R-HSA-1799339">
    <property type="pathway name" value="SRP-dependent cotranslational protein targeting to membrane"/>
</dbReference>
<dbReference type="Reactome" id="R-HSA-192823">
    <property type="pathway name" value="Viral mRNA Translation"/>
</dbReference>
<dbReference type="Reactome" id="R-HSA-2408557">
    <property type="pathway name" value="Selenocysteine synthesis"/>
</dbReference>
<dbReference type="Reactome" id="R-HSA-6791226">
    <property type="pathway name" value="Major pathway of rRNA processing in the nucleolus and cytosol"/>
</dbReference>
<dbReference type="Reactome" id="R-HSA-72649">
    <property type="pathway name" value="Translation initiation complex formation"/>
</dbReference>
<dbReference type="Reactome" id="R-HSA-72689">
    <property type="pathway name" value="Formation of a pool of free 40S subunits"/>
</dbReference>
<dbReference type="Reactome" id="R-HSA-72695">
    <property type="pathway name" value="Formation of the ternary complex, and subsequently, the 43S complex"/>
</dbReference>
<dbReference type="Reactome" id="R-HSA-72702">
    <property type="pathway name" value="Ribosomal scanning and start codon recognition"/>
</dbReference>
<dbReference type="Reactome" id="R-HSA-72706">
    <property type="pathway name" value="GTP hydrolysis and joining of the 60S ribosomal subunit"/>
</dbReference>
<dbReference type="Reactome" id="R-HSA-72764">
    <property type="pathway name" value="Eukaryotic Translation Termination"/>
</dbReference>
<dbReference type="Reactome" id="R-HSA-9010553">
    <property type="pathway name" value="Regulation of expression of SLITs and ROBOs"/>
</dbReference>
<dbReference type="Reactome" id="R-HSA-9633012">
    <property type="pathway name" value="Response of EIF2AK4 (GCN2) to amino acid deficiency"/>
</dbReference>
<dbReference type="Reactome" id="R-HSA-9735869">
    <property type="pathway name" value="SARS-CoV-1 modulates host translation machinery"/>
</dbReference>
<dbReference type="Reactome" id="R-HSA-9754678">
    <property type="pathway name" value="SARS-CoV-2 modulates host translation machinery"/>
</dbReference>
<dbReference type="Reactome" id="R-HSA-975956">
    <property type="pathway name" value="Nonsense Mediated Decay (NMD) independent of the Exon Junction Complex (EJC)"/>
</dbReference>
<dbReference type="Reactome" id="R-HSA-975957">
    <property type="pathway name" value="Nonsense Mediated Decay (NMD) enhanced by the Exon Junction Complex (EJC)"/>
</dbReference>
<dbReference type="SignaLink" id="P62280"/>
<dbReference type="SIGNOR" id="P62280"/>
<dbReference type="BioGRID-ORCS" id="6205">
    <property type="hits" value="870 hits in 1142 CRISPR screens"/>
</dbReference>
<dbReference type="CD-CODE" id="232F8A39">
    <property type="entry name" value="P-body"/>
</dbReference>
<dbReference type="CD-CODE" id="91857CE7">
    <property type="entry name" value="Nucleolus"/>
</dbReference>
<dbReference type="CD-CODE" id="DEE660B4">
    <property type="entry name" value="Stress granule"/>
</dbReference>
<dbReference type="CD-CODE" id="FB4E32DD">
    <property type="entry name" value="Presynaptic clusters and postsynaptic densities"/>
</dbReference>
<dbReference type="ChiTaRS" id="RPS11">
    <property type="organism name" value="human"/>
</dbReference>
<dbReference type="EvolutionaryTrace" id="P62280"/>
<dbReference type="GeneWiki" id="RPS11"/>
<dbReference type="GenomeRNAi" id="6205"/>
<dbReference type="Pharos" id="P62280">
    <property type="development level" value="Tbio"/>
</dbReference>
<dbReference type="PRO" id="PR:P62280"/>
<dbReference type="Proteomes" id="UP000005640">
    <property type="component" value="Chromosome 19"/>
</dbReference>
<dbReference type="RNAct" id="P62280">
    <property type="molecule type" value="protein"/>
</dbReference>
<dbReference type="Bgee" id="ENSG00000142534">
    <property type="expression patterns" value="Expressed in upper leg skin and 218 other cell types or tissues"/>
</dbReference>
<dbReference type="ExpressionAtlas" id="P62280">
    <property type="expression patterns" value="baseline and differential"/>
</dbReference>
<dbReference type="GO" id="GO:0005737">
    <property type="term" value="C:cytoplasm"/>
    <property type="evidence" value="ECO:0007005"/>
    <property type="project" value="UniProtKB"/>
</dbReference>
<dbReference type="GO" id="GO:0005829">
    <property type="term" value="C:cytosol"/>
    <property type="evidence" value="ECO:0000304"/>
    <property type="project" value="Reactome"/>
</dbReference>
<dbReference type="GO" id="GO:0022626">
    <property type="term" value="C:cytosolic ribosome"/>
    <property type="evidence" value="ECO:0000314"/>
    <property type="project" value="FlyBase"/>
</dbReference>
<dbReference type="GO" id="GO:0022627">
    <property type="term" value="C:cytosolic small ribosomal subunit"/>
    <property type="evidence" value="ECO:0000314"/>
    <property type="project" value="UniProtKB"/>
</dbReference>
<dbReference type="GO" id="GO:0070062">
    <property type="term" value="C:extracellular exosome"/>
    <property type="evidence" value="ECO:0007005"/>
    <property type="project" value="UniProtKB"/>
</dbReference>
<dbReference type="GO" id="GO:0005925">
    <property type="term" value="C:focal adhesion"/>
    <property type="evidence" value="ECO:0007005"/>
    <property type="project" value="UniProtKB"/>
</dbReference>
<dbReference type="GO" id="GO:0016020">
    <property type="term" value="C:membrane"/>
    <property type="evidence" value="ECO:0007005"/>
    <property type="project" value="UniProtKB"/>
</dbReference>
<dbReference type="GO" id="GO:0005730">
    <property type="term" value="C:nucleolus"/>
    <property type="evidence" value="ECO:0007005"/>
    <property type="project" value="UniProtKB"/>
</dbReference>
<dbReference type="GO" id="GO:0005654">
    <property type="term" value="C:nucleoplasm"/>
    <property type="evidence" value="ECO:0000304"/>
    <property type="project" value="Reactome"/>
</dbReference>
<dbReference type="GO" id="GO:0005840">
    <property type="term" value="C:ribosome"/>
    <property type="evidence" value="ECO:0000303"/>
    <property type="project" value="UniProtKB"/>
</dbReference>
<dbReference type="GO" id="GO:0032040">
    <property type="term" value="C:small-subunit processome"/>
    <property type="evidence" value="ECO:0000314"/>
    <property type="project" value="UniProtKB"/>
</dbReference>
<dbReference type="GO" id="GO:0045202">
    <property type="term" value="C:synapse"/>
    <property type="evidence" value="ECO:0007669"/>
    <property type="project" value="Ensembl"/>
</dbReference>
<dbReference type="GO" id="GO:0003723">
    <property type="term" value="F:RNA binding"/>
    <property type="evidence" value="ECO:0007005"/>
    <property type="project" value="UniProtKB"/>
</dbReference>
<dbReference type="GO" id="GO:0019843">
    <property type="term" value="F:rRNA binding"/>
    <property type="evidence" value="ECO:0007669"/>
    <property type="project" value="UniProtKB-KW"/>
</dbReference>
<dbReference type="GO" id="GO:0003735">
    <property type="term" value="F:structural constituent of ribosome"/>
    <property type="evidence" value="ECO:0000314"/>
    <property type="project" value="FlyBase"/>
</dbReference>
<dbReference type="GO" id="GO:0002181">
    <property type="term" value="P:cytoplasmic translation"/>
    <property type="evidence" value="ECO:0000303"/>
    <property type="project" value="ComplexPortal"/>
</dbReference>
<dbReference type="GO" id="GO:0042274">
    <property type="term" value="P:ribosomal small subunit biogenesis"/>
    <property type="evidence" value="ECO:0000314"/>
    <property type="project" value="UniProtKB"/>
</dbReference>
<dbReference type="GO" id="GO:0006412">
    <property type="term" value="P:translation"/>
    <property type="evidence" value="ECO:0000303"/>
    <property type="project" value="UniProtKB"/>
</dbReference>
<dbReference type="CDD" id="cd00364">
    <property type="entry name" value="Ribosomal_uS17"/>
    <property type="match status" value="1"/>
</dbReference>
<dbReference type="FunFam" id="2.40.50.1000:FF:000008">
    <property type="entry name" value="40S ribosomal protein S11"/>
    <property type="match status" value="1"/>
</dbReference>
<dbReference type="Gene3D" id="2.40.50.1000">
    <property type="match status" value="1"/>
</dbReference>
<dbReference type="InterPro" id="IPR012340">
    <property type="entry name" value="NA-bd_OB-fold"/>
</dbReference>
<dbReference type="InterPro" id="IPR000266">
    <property type="entry name" value="Ribosomal_uS17"/>
</dbReference>
<dbReference type="InterPro" id="IPR028333">
    <property type="entry name" value="Ribosomal_uS17_arc/euk"/>
</dbReference>
<dbReference type="InterPro" id="IPR019979">
    <property type="entry name" value="Ribosomal_uS17_CS"/>
</dbReference>
<dbReference type="InterPro" id="IPR032440">
    <property type="entry name" value="Ribosomal_uS17_N"/>
</dbReference>
<dbReference type="NCBIfam" id="NF006345">
    <property type="entry name" value="PRK08572.1"/>
    <property type="match status" value="1"/>
</dbReference>
<dbReference type="NCBIfam" id="TIGR03630">
    <property type="entry name" value="uS17_arch"/>
    <property type="match status" value="1"/>
</dbReference>
<dbReference type="PANTHER" id="PTHR10744">
    <property type="entry name" value="40S RIBOSOMAL PROTEIN S11 FAMILY MEMBER"/>
    <property type="match status" value="1"/>
</dbReference>
<dbReference type="PANTHER" id="PTHR10744:SF52">
    <property type="entry name" value="SMALL RIBOSOMAL SUBUNIT PROTEIN US17"/>
    <property type="match status" value="1"/>
</dbReference>
<dbReference type="Pfam" id="PF00366">
    <property type="entry name" value="Ribosomal_S17"/>
    <property type="match status" value="1"/>
</dbReference>
<dbReference type="Pfam" id="PF16205">
    <property type="entry name" value="Ribosomal_S17_N"/>
    <property type="match status" value="1"/>
</dbReference>
<dbReference type="PRINTS" id="PR00973">
    <property type="entry name" value="RIBOSOMALS17"/>
</dbReference>
<dbReference type="SUPFAM" id="SSF50249">
    <property type="entry name" value="Nucleic acid-binding proteins"/>
    <property type="match status" value="1"/>
</dbReference>
<dbReference type="PROSITE" id="PS00056">
    <property type="entry name" value="RIBOSOMAL_S17"/>
    <property type="match status" value="1"/>
</dbReference>
<keyword id="KW-0002">3D-structure</keyword>
<keyword id="KW-0007">Acetylation</keyword>
<keyword id="KW-0164">Citrullination</keyword>
<keyword id="KW-0963">Cytoplasm</keyword>
<keyword id="KW-0903">Direct protein sequencing</keyword>
<keyword id="KW-0449">Lipoprotein</keyword>
<keyword id="KW-0488">Methylation</keyword>
<keyword id="KW-0539">Nucleus</keyword>
<keyword id="KW-0564">Palmitate</keyword>
<keyword id="KW-0597">Phosphoprotein</keyword>
<keyword id="KW-1267">Proteomics identification</keyword>
<keyword id="KW-1185">Reference proteome</keyword>
<keyword id="KW-0687">Ribonucleoprotein</keyword>
<keyword id="KW-0689">Ribosomal protein</keyword>
<keyword id="KW-0694">RNA-binding</keyword>
<keyword id="KW-0699">rRNA-binding</keyword>
<evidence type="ECO:0000250" key="1">
    <source>
        <dbReference type="UniProtKB" id="P62281"/>
    </source>
</evidence>
<evidence type="ECO:0000269" key="2">
    <source>
    </source>
</evidence>
<evidence type="ECO:0000269" key="3">
    <source>
    </source>
</evidence>
<evidence type="ECO:0000269" key="4">
    <source>
    </source>
</evidence>
<evidence type="ECO:0000269" key="5">
    <source ref="6"/>
</evidence>
<evidence type="ECO:0000303" key="6">
    <source>
    </source>
</evidence>
<evidence type="ECO:0000305" key="7"/>
<evidence type="ECO:0000305" key="8">
    <source>
    </source>
</evidence>
<evidence type="ECO:0000312" key="9">
    <source>
        <dbReference type="HGNC" id="HGNC:10384"/>
    </source>
</evidence>
<evidence type="ECO:0007744" key="10">
    <source>
        <dbReference type="PDB" id="7MQ8"/>
    </source>
</evidence>
<evidence type="ECO:0007744" key="11">
    <source>
        <dbReference type="PDB" id="7MQ9"/>
    </source>
</evidence>
<evidence type="ECO:0007744" key="12">
    <source>
        <dbReference type="PDB" id="7MQA"/>
    </source>
</evidence>
<evidence type="ECO:0007744" key="13">
    <source>
    </source>
</evidence>
<evidence type="ECO:0007744" key="14">
    <source>
    </source>
</evidence>
<evidence type="ECO:0007744" key="15">
    <source>
    </source>
</evidence>
<evidence type="ECO:0007744" key="16">
    <source>
    </source>
</evidence>
<evidence type="ECO:0007744" key="17">
    <source>
    </source>
</evidence>
<evidence type="ECO:0007829" key="18">
    <source>
        <dbReference type="PDB" id="6ZLW"/>
    </source>
</evidence>
<evidence type="ECO:0007829" key="19">
    <source>
        <dbReference type="PDB" id="6ZV6"/>
    </source>
</evidence>
<evidence type="ECO:0007829" key="20">
    <source>
        <dbReference type="PDB" id="7R4X"/>
    </source>
</evidence>
<evidence type="ECO:0007829" key="21">
    <source>
        <dbReference type="PDB" id="7WTW"/>
    </source>
</evidence>
<evidence type="ECO:0007829" key="22">
    <source>
        <dbReference type="PDB" id="7WTZ"/>
    </source>
</evidence>
<protein>
    <recommendedName>
        <fullName evidence="6">Small ribosomal subunit protein uS17</fullName>
    </recommendedName>
    <alternativeName>
        <fullName>40S ribosomal protein S11</fullName>
    </alternativeName>
</protein>